<keyword id="KW-0028">Amino-acid biosynthesis</keyword>
<keyword id="KW-0055">Arginine biosynthesis</keyword>
<keyword id="KW-0067">ATP-binding</keyword>
<keyword id="KW-0963">Cytoplasm</keyword>
<keyword id="KW-0436">Ligase</keyword>
<keyword id="KW-0547">Nucleotide-binding</keyword>
<keyword id="KW-1185">Reference proteome</keyword>
<feature type="chain" id="PRO_0000263945" description="Argininosuccinate synthase">
    <location>
        <begin position="1"/>
        <end position="407"/>
    </location>
</feature>
<feature type="binding site" evidence="1">
    <location>
        <begin position="12"/>
        <end position="20"/>
    </location>
    <ligand>
        <name>ATP</name>
        <dbReference type="ChEBI" id="CHEBI:30616"/>
    </ligand>
</feature>
<feature type="binding site" evidence="1">
    <location>
        <position position="39"/>
    </location>
    <ligand>
        <name>ATP</name>
        <dbReference type="ChEBI" id="CHEBI:30616"/>
    </ligand>
</feature>
<feature type="binding site" evidence="1">
    <location>
        <position position="90"/>
    </location>
    <ligand>
        <name>L-citrulline</name>
        <dbReference type="ChEBI" id="CHEBI:57743"/>
    </ligand>
</feature>
<feature type="binding site" evidence="1">
    <location>
        <position position="95"/>
    </location>
    <ligand>
        <name>L-citrulline</name>
        <dbReference type="ChEBI" id="CHEBI:57743"/>
    </ligand>
</feature>
<feature type="binding site" evidence="1">
    <location>
        <position position="120"/>
    </location>
    <ligand>
        <name>ATP</name>
        <dbReference type="ChEBI" id="CHEBI:30616"/>
    </ligand>
</feature>
<feature type="binding site" evidence="1">
    <location>
        <position position="122"/>
    </location>
    <ligand>
        <name>L-aspartate</name>
        <dbReference type="ChEBI" id="CHEBI:29991"/>
    </ligand>
</feature>
<feature type="binding site" evidence="1">
    <location>
        <position position="126"/>
    </location>
    <ligand>
        <name>L-aspartate</name>
        <dbReference type="ChEBI" id="CHEBI:29991"/>
    </ligand>
</feature>
<feature type="binding site" evidence="1">
    <location>
        <position position="126"/>
    </location>
    <ligand>
        <name>L-citrulline</name>
        <dbReference type="ChEBI" id="CHEBI:57743"/>
    </ligand>
</feature>
<feature type="binding site" evidence="1">
    <location>
        <position position="127"/>
    </location>
    <ligand>
        <name>L-aspartate</name>
        <dbReference type="ChEBI" id="CHEBI:29991"/>
    </ligand>
</feature>
<feature type="binding site" evidence="1">
    <location>
        <position position="130"/>
    </location>
    <ligand>
        <name>L-citrulline</name>
        <dbReference type="ChEBI" id="CHEBI:57743"/>
    </ligand>
</feature>
<feature type="binding site" evidence="1">
    <location>
        <position position="181"/>
    </location>
    <ligand>
        <name>L-citrulline</name>
        <dbReference type="ChEBI" id="CHEBI:57743"/>
    </ligand>
</feature>
<feature type="binding site" evidence="1">
    <location>
        <position position="190"/>
    </location>
    <ligand>
        <name>L-citrulline</name>
        <dbReference type="ChEBI" id="CHEBI:57743"/>
    </ligand>
</feature>
<feature type="binding site" evidence="1">
    <location>
        <position position="266"/>
    </location>
    <ligand>
        <name>L-citrulline</name>
        <dbReference type="ChEBI" id="CHEBI:57743"/>
    </ligand>
</feature>
<feature type="binding site" evidence="1">
    <location>
        <position position="278"/>
    </location>
    <ligand>
        <name>L-citrulline</name>
        <dbReference type="ChEBI" id="CHEBI:57743"/>
    </ligand>
</feature>
<comment type="catalytic activity">
    <reaction evidence="1">
        <text>L-citrulline + L-aspartate + ATP = 2-(N(omega)-L-arginino)succinate + AMP + diphosphate + H(+)</text>
        <dbReference type="Rhea" id="RHEA:10932"/>
        <dbReference type="ChEBI" id="CHEBI:15378"/>
        <dbReference type="ChEBI" id="CHEBI:29991"/>
        <dbReference type="ChEBI" id="CHEBI:30616"/>
        <dbReference type="ChEBI" id="CHEBI:33019"/>
        <dbReference type="ChEBI" id="CHEBI:57472"/>
        <dbReference type="ChEBI" id="CHEBI:57743"/>
        <dbReference type="ChEBI" id="CHEBI:456215"/>
        <dbReference type="EC" id="6.3.4.5"/>
    </reaction>
</comment>
<comment type="pathway">
    <text evidence="1">Amino-acid biosynthesis; L-arginine biosynthesis; L-arginine from L-ornithine and carbamoyl phosphate: step 2/3.</text>
</comment>
<comment type="subunit">
    <text evidence="1">Homotetramer.</text>
</comment>
<comment type="subcellular location">
    <subcellularLocation>
        <location evidence="1">Cytoplasm</location>
    </subcellularLocation>
</comment>
<comment type="similarity">
    <text evidence="1">Belongs to the argininosuccinate synthase family. Type 1 subfamily.</text>
</comment>
<gene>
    <name evidence="1" type="primary">argG</name>
    <name type="ordered locus">Nmul_A1043</name>
</gene>
<protein>
    <recommendedName>
        <fullName evidence="1">Argininosuccinate synthase</fullName>
        <ecNumber evidence="1">6.3.4.5</ecNumber>
    </recommendedName>
    <alternativeName>
        <fullName evidence="1">Citrulline--aspartate ligase</fullName>
    </alternativeName>
</protein>
<accession>Q2YA75</accession>
<dbReference type="EC" id="6.3.4.5" evidence="1"/>
<dbReference type="EMBL" id="CP000103">
    <property type="protein sequence ID" value="ABB74346.1"/>
    <property type="molecule type" value="Genomic_DNA"/>
</dbReference>
<dbReference type="RefSeq" id="WP_011380391.1">
    <property type="nucleotide sequence ID" value="NC_007614.1"/>
</dbReference>
<dbReference type="SMR" id="Q2YA75"/>
<dbReference type="STRING" id="323848.Nmul_A1043"/>
<dbReference type="KEGG" id="nmu:Nmul_A1043"/>
<dbReference type="eggNOG" id="COG0137">
    <property type="taxonomic scope" value="Bacteria"/>
</dbReference>
<dbReference type="HOGENOM" id="CLU_032784_4_2_4"/>
<dbReference type="OrthoDB" id="9801641at2"/>
<dbReference type="UniPathway" id="UPA00068">
    <property type="reaction ID" value="UER00113"/>
</dbReference>
<dbReference type="Proteomes" id="UP000002718">
    <property type="component" value="Chromosome"/>
</dbReference>
<dbReference type="GO" id="GO:0005737">
    <property type="term" value="C:cytoplasm"/>
    <property type="evidence" value="ECO:0007669"/>
    <property type="project" value="UniProtKB-SubCell"/>
</dbReference>
<dbReference type="GO" id="GO:0004055">
    <property type="term" value="F:argininosuccinate synthase activity"/>
    <property type="evidence" value="ECO:0007669"/>
    <property type="project" value="UniProtKB-UniRule"/>
</dbReference>
<dbReference type="GO" id="GO:0005524">
    <property type="term" value="F:ATP binding"/>
    <property type="evidence" value="ECO:0007669"/>
    <property type="project" value="UniProtKB-UniRule"/>
</dbReference>
<dbReference type="GO" id="GO:0000053">
    <property type="term" value="P:argininosuccinate metabolic process"/>
    <property type="evidence" value="ECO:0007669"/>
    <property type="project" value="TreeGrafter"/>
</dbReference>
<dbReference type="GO" id="GO:0006526">
    <property type="term" value="P:L-arginine biosynthetic process"/>
    <property type="evidence" value="ECO:0007669"/>
    <property type="project" value="UniProtKB-UniRule"/>
</dbReference>
<dbReference type="GO" id="GO:0000050">
    <property type="term" value="P:urea cycle"/>
    <property type="evidence" value="ECO:0007669"/>
    <property type="project" value="TreeGrafter"/>
</dbReference>
<dbReference type="CDD" id="cd01999">
    <property type="entry name" value="ASS"/>
    <property type="match status" value="1"/>
</dbReference>
<dbReference type="FunFam" id="1.20.5.470:FF:000001">
    <property type="entry name" value="Argininosuccinate synthase"/>
    <property type="match status" value="1"/>
</dbReference>
<dbReference type="FunFam" id="3.40.50.620:FF:000019">
    <property type="entry name" value="Argininosuccinate synthase"/>
    <property type="match status" value="1"/>
</dbReference>
<dbReference type="FunFam" id="3.90.1260.10:FF:000007">
    <property type="entry name" value="Argininosuccinate synthase"/>
    <property type="match status" value="1"/>
</dbReference>
<dbReference type="Gene3D" id="3.90.1260.10">
    <property type="entry name" value="Argininosuccinate synthetase, chain A, domain 2"/>
    <property type="match status" value="1"/>
</dbReference>
<dbReference type="Gene3D" id="3.40.50.620">
    <property type="entry name" value="HUPs"/>
    <property type="match status" value="1"/>
</dbReference>
<dbReference type="Gene3D" id="1.20.5.470">
    <property type="entry name" value="Single helix bin"/>
    <property type="match status" value="1"/>
</dbReference>
<dbReference type="HAMAP" id="MF_00005">
    <property type="entry name" value="Arg_succ_synth_type1"/>
    <property type="match status" value="1"/>
</dbReference>
<dbReference type="InterPro" id="IPR048268">
    <property type="entry name" value="Arginosuc_syn_C"/>
</dbReference>
<dbReference type="InterPro" id="IPR048267">
    <property type="entry name" value="Arginosuc_syn_N"/>
</dbReference>
<dbReference type="InterPro" id="IPR001518">
    <property type="entry name" value="Arginosuc_synth"/>
</dbReference>
<dbReference type="InterPro" id="IPR018223">
    <property type="entry name" value="Arginosuc_synth_CS"/>
</dbReference>
<dbReference type="InterPro" id="IPR023434">
    <property type="entry name" value="Arginosuc_synth_type_1_subfam"/>
</dbReference>
<dbReference type="InterPro" id="IPR024074">
    <property type="entry name" value="AS_cat/multimer_dom_body"/>
</dbReference>
<dbReference type="InterPro" id="IPR014729">
    <property type="entry name" value="Rossmann-like_a/b/a_fold"/>
</dbReference>
<dbReference type="NCBIfam" id="TIGR00032">
    <property type="entry name" value="argG"/>
    <property type="match status" value="1"/>
</dbReference>
<dbReference type="NCBIfam" id="NF001770">
    <property type="entry name" value="PRK00509.1"/>
    <property type="match status" value="1"/>
</dbReference>
<dbReference type="PANTHER" id="PTHR11587">
    <property type="entry name" value="ARGININOSUCCINATE SYNTHASE"/>
    <property type="match status" value="1"/>
</dbReference>
<dbReference type="PANTHER" id="PTHR11587:SF2">
    <property type="entry name" value="ARGININOSUCCINATE SYNTHASE"/>
    <property type="match status" value="1"/>
</dbReference>
<dbReference type="Pfam" id="PF20979">
    <property type="entry name" value="Arginosuc_syn_C"/>
    <property type="match status" value="1"/>
</dbReference>
<dbReference type="Pfam" id="PF00764">
    <property type="entry name" value="Arginosuc_synth"/>
    <property type="match status" value="1"/>
</dbReference>
<dbReference type="SUPFAM" id="SSF52402">
    <property type="entry name" value="Adenine nucleotide alpha hydrolases-like"/>
    <property type="match status" value="1"/>
</dbReference>
<dbReference type="SUPFAM" id="SSF69864">
    <property type="entry name" value="Argininosuccinate synthetase, C-terminal domain"/>
    <property type="match status" value="1"/>
</dbReference>
<dbReference type="PROSITE" id="PS00564">
    <property type="entry name" value="ARGININOSUCCIN_SYN_1"/>
    <property type="match status" value="1"/>
</dbReference>
<dbReference type="PROSITE" id="PS00565">
    <property type="entry name" value="ARGININOSUCCIN_SYN_2"/>
    <property type="match status" value="1"/>
</dbReference>
<proteinExistence type="inferred from homology"/>
<organism>
    <name type="scientific">Nitrosospira multiformis (strain ATCC 25196 / NCIMB 11849 / C 71)</name>
    <dbReference type="NCBI Taxonomy" id="323848"/>
    <lineage>
        <taxon>Bacteria</taxon>
        <taxon>Pseudomonadati</taxon>
        <taxon>Pseudomonadota</taxon>
        <taxon>Betaproteobacteria</taxon>
        <taxon>Nitrosomonadales</taxon>
        <taxon>Nitrosomonadaceae</taxon>
        <taxon>Nitrosospira</taxon>
    </lineage>
</organism>
<reference key="1">
    <citation type="submission" date="2005-08" db="EMBL/GenBank/DDBJ databases">
        <title>Complete sequence of chromosome 1 of Nitrosospira multiformis ATCC 25196.</title>
        <authorList>
            <person name="Copeland A."/>
            <person name="Lucas S."/>
            <person name="Lapidus A."/>
            <person name="Barry K."/>
            <person name="Detter J.C."/>
            <person name="Glavina T."/>
            <person name="Hammon N."/>
            <person name="Israni S."/>
            <person name="Pitluck S."/>
            <person name="Chain P."/>
            <person name="Malfatti S."/>
            <person name="Shin M."/>
            <person name="Vergez L."/>
            <person name="Schmutz J."/>
            <person name="Larimer F."/>
            <person name="Land M."/>
            <person name="Hauser L."/>
            <person name="Kyrpides N."/>
            <person name="Lykidis A."/>
            <person name="Richardson P."/>
        </authorList>
    </citation>
    <scope>NUCLEOTIDE SEQUENCE [LARGE SCALE GENOMIC DNA]</scope>
    <source>
        <strain>ATCC 25196 / NCIMB 11849 / C 71</strain>
    </source>
</reference>
<sequence length="407" mass="46361">MNVAQIKKVVLAFSGGLDTSVILKWLQDTYRCEVVTFTADIGQGEEVEPARAKAKQLGVREIFIDDLREEFVRDFVFPMFRANTLYEGEYLLGTSIARPLIAKRQIEIARETGADAVSHGATGKGNDQVRFELGYYALQPDIRVIAPWREWDLTSREKLLKYAEQHGIPVEMKKKEGSPYSMDANLLHISYEGRILEDPAQEPEESMWRWSVSPEKAPDSPEYLDLEFRQGDIVALDGEELSPARLLARLNELGGKHGIGRLDLVENRYVGMKSRGCYETPGGTIMLRAHRAMESITLDREVAHLKDELMPRYAELIYNGYWWSPERRMMQTMIDASQAHVNGWVRVKLYKGNVIVVGRDSKTDSLFDPHIATFEDDQGAYNQMDAAGFIKLNALRMRIAANLRNRK</sequence>
<name>ASSY_NITMU</name>
<evidence type="ECO:0000255" key="1">
    <source>
        <dbReference type="HAMAP-Rule" id="MF_00005"/>
    </source>
</evidence>